<organismHost>
    <name type="scientific">Homo sapiens</name>
    <name type="common">Human</name>
    <dbReference type="NCBI Taxonomy" id="9606"/>
</organismHost>
<name>V_PI4HA</name>
<comment type="function">
    <text evidence="1">Blocks host interferon signaling.</text>
</comment>
<comment type="RNA editing">
    <location>
        <position position="153" evidence="3"/>
    </location>
    <text>Partially edited. RNA editing at this position consists of an insertion of two guanine nucleotides. The sequence displayed here is the V protein, derived from the unedited RNA. The edited RNA gives rise to the P protein (AC P22044).</text>
</comment>
<comment type="similarity">
    <text evidence="4">Belongs to the paramyxoviruses V protein family.</text>
</comment>
<feature type="chain" id="PRO_0000142817" description="Non-structural protein V">
    <location>
        <begin position="1"/>
        <end position="229"/>
    </location>
</feature>
<feature type="region of interest" description="Disordered" evidence="2">
    <location>
        <begin position="30"/>
        <end position="112"/>
    </location>
</feature>
<feature type="compositionally biased region" description="Polar residues" evidence="2">
    <location>
        <begin position="30"/>
        <end position="46"/>
    </location>
</feature>
<feature type="compositionally biased region" description="Polar residues" evidence="2">
    <location>
        <begin position="82"/>
        <end position="112"/>
    </location>
</feature>
<feature type="binding site" evidence="1">
    <location>
        <position position="178"/>
    </location>
    <ligand>
        <name>Zn(2+)</name>
        <dbReference type="ChEBI" id="CHEBI:29105"/>
        <label>1</label>
    </ligand>
</feature>
<feature type="binding site" evidence="1">
    <location>
        <position position="197"/>
    </location>
    <ligand>
        <name>Zn(2+)</name>
        <dbReference type="ChEBI" id="CHEBI:29105"/>
        <label>1</label>
    </ligand>
</feature>
<feature type="binding site" evidence="1">
    <location>
        <position position="201"/>
    </location>
    <ligand>
        <name>Zn(2+)</name>
        <dbReference type="ChEBI" id="CHEBI:29105"/>
        <label>2</label>
    </ligand>
</feature>
<feature type="binding site" evidence="1">
    <location>
        <position position="213"/>
    </location>
    <ligand>
        <name>Zn(2+)</name>
        <dbReference type="ChEBI" id="CHEBI:29105"/>
        <label>2</label>
    </ligand>
</feature>
<feature type="binding site" evidence="1">
    <location>
        <position position="215"/>
    </location>
    <ligand>
        <name>Zn(2+)</name>
        <dbReference type="ChEBI" id="CHEBI:29105"/>
        <label>2</label>
    </ligand>
</feature>
<feature type="binding site" evidence="1">
    <location>
        <position position="218"/>
    </location>
    <ligand>
        <name>Zn(2+)</name>
        <dbReference type="ChEBI" id="CHEBI:29105"/>
        <label>2</label>
    </ligand>
</feature>
<feature type="binding site" evidence="1">
    <location>
        <position position="222"/>
    </location>
    <ligand>
        <name>Zn(2+)</name>
        <dbReference type="ChEBI" id="CHEBI:29105"/>
        <label>1</label>
    </ligand>
</feature>
<feature type="binding site" evidence="1">
    <location>
        <position position="225"/>
    </location>
    <ligand>
        <name>Zn(2+)</name>
        <dbReference type="ChEBI" id="CHEBI:29105"/>
        <label>1</label>
    </ligand>
</feature>
<sequence>MSFEISVEEIEELIETGNLNIDHALKELGATSQSSLNKPPSQSSRTEGNDGGTKISRNPAPVEAPAHTSTAQRSHNEENESGRQNLDSLSMISNKPQTGTLLMGSDTQLPSPSKTYQGLILDAKKRALNEPRRDQKITNEHGSMNDTRIFKRGEYRYQERGLGYTESEIKNTTPTPRHRREYSISWVNGRTTISEWCNPCCAPVKSTASVEKCTCGRCPKICELCIRDP</sequence>
<dbReference type="EMBL" id="M55975">
    <property type="protein sequence ID" value="AAA46805.1"/>
    <property type="molecule type" value="Genomic_RNA"/>
</dbReference>
<dbReference type="PIR" id="B43685">
    <property type="entry name" value="B43685"/>
</dbReference>
<dbReference type="DNASU" id="16488735"/>
<dbReference type="KEGG" id="vg:16488735"/>
<dbReference type="GO" id="GO:0046872">
    <property type="term" value="F:metal ion binding"/>
    <property type="evidence" value="ECO:0007669"/>
    <property type="project" value="UniProtKB-KW"/>
</dbReference>
<dbReference type="GO" id="GO:0039554">
    <property type="term" value="P:symbiont-mediated suppression of host cytoplasmic pattern recognition receptor signaling pathway via inhibition of MDA-5 activity"/>
    <property type="evidence" value="ECO:0007669"/>
    <property type="project" value="UniProtKB-KW"/>
</dbReference>
<dbReference type="GO" id="GO:0039563">
    <property type="term" value="P:symbiont-mediated suppression of host JAK-STAT cascade via inhibition of STAT1 activity"/>
    <property type="evidence" value="ECO:0007669"/>
    <property type="project" value="UniProtKB-KW"/>
</dbReference>
<dbReference type="GO" id="GO:0039502">
    <property type="term" value="P:symbiont-mediated suppression of host type I interferon-mediated signaling pathway"/>
    <property type="evidence" value="ECO:0007669"/>
    <property type="project" value="UniProtKB-KW"/>
</dbReference>
<dbReference type="Gene3D" id="4.10.80.340">
    <property type="match status" value="1"/>
</dbReference>
<dbReference type="InterPro" id="IPR024279">
    <property type="entry name" value="Paramyx_V_Zn-bd"/>
</dbReference>
<dbReference type="Pfam" id="PF13008">
    <property type="entry name" value="zf-Paramyx-P"/>
    <property type="match status" value="1"/>
</dbReference>
<protein>
    <recommendedName>
        <fullName>Non-structural protein V</fullName>
    </recommendedName>
</protein>
<organism>
    <name type="scientific">Human parainfluenza 4a virus (strain Toshiba)</name>
    <name type="common">HPIV-4a</name>
    <dbReference type="NCBI Taxonomy" id="11225"/>
    <lineage>
        <taxon>Viruses</taxon>
        <taxon>Riboviria</taxon>
        <taxon>Orthornavirae</taxon>
        <taxon>Negarnaviricota</taxon>
        <taxon>Haploviricotina</taxon>
        <taxon>Monjiviricetes</taxon>
        <taxon>Mononegavirales</taxon>
        <taxon>Paramyxoviridae</taxon>
        <taxon>Rubulavirinae</taxon>
        <taxon>Orthorubulavirus</taxon>
        <taxon>Orthorubulavirus hominis</taxon>
        <taxon>Human orthorubulavirus 4</taxon>
    </lineage>
</organism>
<accession>P21739</accession>
<evidence type="ECO:0000250" key="1"/>
<evidence type="ECO:0000256" key="2">
    <source>
        <dbReference type="SAM" id="MobiDB-lite"/>
    </source>
</evidence>
<evidence type="ECO:0000269" key="3">
    <source>
    </source>
</evidence>
<evidence type="ECO:0000305" key="4"/>
<proteinExistence type="inferred from homology"/>
<gene>
    <name type="primary">P/V</name>
</gene>
<reference key="1">
    <citation type="journal article" date="1990" name="Virology">
        <title>Sequence analysis of the phosphoprotein (P) genes of human parainfluenza type 4A and 4B viruses and RNA editing at transcript of the P genes: the number of G residues added is imprecise.</title>
        <authorList>
            <person name="Kondo K."/>
            <person name="Bando H."/>
            <person name="Tsurudome M."/>
            <person name="Kawano M."/>
            <person name="Nishio M."/>
            <person name="Ito Y."/>
        </authorList>
    </citation>
    <scope>NUCLEOTIDE SEQUENCE [GENOMIC RNA]</scope>
    <scope>RNA EDITING</scope>
</reference>
<keyword id="KW-0945">Host-virus interaction</keyword>
<keyword id="KW-1090">Inhibition of host innate immune response by virus</keyword>
<keyword id="KW-1114">Inhibition of host interferon signaling pathway by virus</keyword>
<keyword id="KW-1089">Inhibition of host MDA5 by virus</keyword>
<keyword id="KW-1113">Inhibition of host RLR pathway by virus</keyword>
<keyword id="KW-1105">Inhibition of host STAT1 by virus</keyword>
<keyword id="KW-0922">Interferon antiviral system evasion</keyword>
<keyword id="KW-0479">Metal-binding</keyword>
<keyword id="KW-0691">RNA editing</keyword>
<keyword id="KW-0899">Viral immunoevasion</keyword>
<keyword id="KW-0862">Zinc</keyword>